<evidence type="ECO:0000255" key="1">
    <source>
        <dbReference type="HAMAP-Rule" id="MF_01537"/>
    </source>
</evidence>
<sequence>MLQSNEYFSGKVKSIGFSSSSTGRASVGVMVEGEYTFSTAEPEEMTVISGALNVLLPDATDWQVYEAGSVFNVPGHSEFHLQVAEPTSYLCRYL</sequence>
<feature type="chain" id="PRO_0000298694" description="Pyrimidine/purine nucleoside phosphorylase">
    <location>
        <begin position="1"/>
        <end position="94"/>
    </location>
</feature>
<keyword id="KW-0328">Glycosyltransferase</keyword>
<keyword id="KW-1185">Reference proteome</keyword>
<keyword id="KW-0808">Transferase</keyword>
<dbReference type="EC" id="2.4.2.1" evidence="1"/>
<dbReference type="EC" id="2.4.2.2" evidence="1"/>
<dbReference type="EMBL" id="CP000468">
    <property type="protein sequence ID" value="ABI99852.1"/>
    <property type="molecule type" value="Genomic_DNA"/>
</dbReference>
<dbReference type="RefSeq" id="WP_000941942.1">
    <property type="nucleotide sequence ID" value="NZ_CADILS010000009.1"/>
</dbReference>
<dbReference type="SMR" id="A1A863"/>
<dbReference type="GeneID" id="93777070"/>
<dbReference type="KEGG" id="ecv:APECO1_1617"/>
<dbReference type="HOGENOM" id="CLU_157874_0_0_6"/>
<dbReference type="Proteomes" id="UP000008216">
    <property type="component" value="Chromosome"/>
</dbReference>
<dbReference type="GO" id="GO:0005829">
    <property type="term" value="C:cytosol"/>
    <property type="evidence" value="ECO:0007669"/>
    <property type="project" value="TreeGrafter"/>
</dbReference>
<dbReference type="GO" id="GO:0047975">
    <property type="term" value="F:guanosine phosphorylase activity"/>
    <property type="evidence" value="ECO:0007669"/>
    <property type="project" value="UniProtKB-EC"/>
</dbReference>
<dbReference type="GO" id="GO:0004731">
    <property type="term" value="F:purine-nucleoside phosphorylase activity"/>
    <property type="evidence" value="ECO:0007669"/>
    <property type="project" value="UniProtKB-UniRule"/>
</dbReference>
<dbReference type="GO" id="GO:0009032">
    <property type="term" value="F:thymidine phosphorylase activity"/>
    <property type="evidence" value="ECO:0007669"/>
    <property type="project" value="UniProtKB-EC"/>
</dbReference>
<dbReference type="GO" id="GO:0004850">
    <property type="term" value="F:uridine phosphorylase activity"/>
    <property type="evidence" value="ECO:0007669"/>
    <property type="project" value="UniProtKB-EC"/>
</dbReference>
<dbReference type="CDD" id="cd20296">
    <property type="entry name" value="cupin_PpnP-like"/>
    <property type="match status" value="1"/>
</dbReference>
<dbReference type="FunFam" id="2.60.120.10:FF:000016">
    <property type="entry name" value="Pyrimidine/purine nucleoside phosphorylase"/>
    <property type="match status" value="1"/>
</dbReference>
<dbReference type="Gene3D" id="2.60.120.10">
    <property type="entry name" value="Jelly Rolls"/>
    <property type="match status" value="1"/>
</dbReference>
<dbReference type="HAMAP" id="MF_01537">
    <property type="entry name" value="Nucleos_phosphorylase_PpnP"/>
    <property type="match status" value="1"/>
</dbReference>
<dbReference type="InterPro" id="IPR009664">
    <property type="entry name" value="Ppnp"/>
</dbReference>
<dbReference type="InterPro" id="IPR014710">
    <property type="entry name" value="RmlC-like_jellyroll"/>
</dbReference>
<dbReference type="InterPro" id="IPR011051">
    <property type="entry name" value="RmlC_Cupin_sf"/>
</dbReference>
<dbReference type="NCBIfam" id="NF007875">
    <property type="entry name" value="PRK10579.1"/>
    <property type="match status" value="1"/>
</dbReference>
<dbReference type="PANTHER" id="PTHR36540">
    <property type="entry name" value="PYRIMIDINE/PURINE NUCLEOSIDE PHOSPHORYLASE"/>
    <property type="match status" value="1"/>
</dbReference>
<dbReference type="PANTHER" id="PTHR36540:SF1">
    <property type="entry name" value="PYRIMIDINE_PURINE NUCLEOSIDE PHOSPHORYLASE"/>
    <property type="match status" value="1"/>
</dbReference>
<dbReference type="Pfam" id="PF06865">
    <property type="entry name" value="Ppnp"/>
    <property type="match status" value="1"/>
</dbReference>
<dbReference type="SUPFAM" id="SSF51182">
    <property type="entry name" value="RmlC-like cupins"/>
    <property type="match status" value="1"/>
</dbReference>
<accession>A1A863</accession>
<reference key="1">
    <citation type="journal article" date="2007" name="J. Bacteriol.">
        <title>The genome sequence of avian pathogenic Escherichia coli strain O1:K1:H7 shares strong similarities with human extraintestinal pathogenic E. coli genomes.</title>
        <authorList>
            <person name="Johnson T.J."/>
            <person name="Kariyawasam S."/>
            <person name="Wannemuehler Y."/>
            <person name="Mangiamele P."/>
            <person name="Johnson S.J."/>
            <person name="Doetkott C."/>
            <person name="Skyberg J.A."/>
            <person name="Lynne A.M."/>
            <person name="Johnson J.R."/>
            <person name="Nolan L.K."/>
        </authorList>
    </citation>
    <scope>NUCLEOTIDE SEQUENCE [LARGE SCALE GENOMIC DNA]</scope>
</reference>
<comment type="function">
    <text evidence="1">Catalyzes the phosphorolysis of diverse nucleosides, yielding D-ribose 1-phosphate and the respective free bases. Can use uridine, adenosine, guanosine, cytidine, thymidine, inosine and xanthosine as substrates. Also catalyzes the reverse reactions.</text>
</comment>
<comment type="catalytic activity">
    <reaction evidence="1">
        <text>a purine D-ribonucleoside + phosphate = a purine nucleobase + alpha-D-ribose 1-phosphate</text>
        <dbReference type="Rhea" id="RHEA:19805"/>
        <dbReference type="ChEBI" id="CHEBI:26386"/>
        <dbReference type="ChEBI" id="CHEBI:43474"/>
        <dbReference type="ChEBI" id="CHEBI:57720"/>
        <dbReference type="ChEBI" id="CHEBI:142355"/>
        <dbReference type="EC" id="2.4.2.1"/>
    </reaction>
</comment>
<comment type="catalytic activity">
    <reaction evidence="1">
        <text>adenosine + phosphate = alpha-D-ribose 1-phosphate + adenine</text>
        <dbReference type="Rhea" id="RHEA:27642"/>
        <dbReference type="ChEBI" id="CHEBI:16335"/>
        <dbReference type="ChEBI" id="CHEBI:16708"/>
        <dbReference type="ChEBI" id="CHEBI:43474"/>
        <dbReference type="ChEBI" id="CHEBI:57720"/>
        <dbReference type="EC" id="2.4.2.1"/>
    </reaction>
</comment>
<comment type="catalytic activity">
    <reaction evidence="1">
        <text>cytidine + phosphate = cytosine + alpha-D-ribose 1-phosphate</text>
        <dbReference type="Rhea" id="RHEA:52540"/>
        <dbReference type="ChEBI" id="CHEBI:16040"/>
        <dbReference type="ChEBI" id="CHEBI:17562"/>
        <dbReference type="ChEBI" id="CHEBI:43474"/>
        <dbReference type="ChEBI" id="CHEBI:57720"/>
        <dbReference type="EC" id="2.4.2.2"/>
    </reaction>
</comment>
<comment type="catalytic activity">
    <reaction evidence="1">
        <text>guanosine + phosphate = alpha-D-ribose 1-phosphate + guanine</text>
        <dbReference type="Rhea" id="RHEA:13233"/>
        <dbReference type="ChEBI" id="CHEBI:16235"/>
        <dbReference type="ChEBI" id="CHEBI:16750"/>
        <dbReference type="ChEBI" id="CHEBI:43474"/>
        <dbReference type="ChEBI" id="CHEBI:57720"/>
        <dbReference type="EC" id="2.4.2.1"/>
    </reaction>
</comment>
<comment type="catalytic activity">
    <reaction evidence="1">
        <text>inosine + phosphate = alpha-D-ribose 1-phosphate + hypoxanthine</text>
        <dbReference type="Rhea" id="RHEA:27646"/>
        <dbReference type="ChEBI" id="CHEBI:17368"/>
        <dbReference type="ChEBI" id="CHEBI:17596"/>
        <dbReference type="ChEBI" id="CHEBI:43474"/>
        <dbReference type="ChEBI" id="CHEBI:57720"/>
        <dbReference type="EC" id="2.4.2.1"/>
    </reaction>
</comment>
<comment type="catalytic activity">
    <reaction evidence="1">
        <text>thymidine + phosphate = 2-deoxy-alpha-D-ribose 1-phosphate + thymine</text>
        <dbReference type="Rhea" id="RHEA:16037"/>
        <dbReference type="ChEBI" id="CHEBI:17748"/>
        <dbReference type="ChEBI" id="CHEBI:17821"/>
        <dbReference type="ChEBI" id="CHEBI:43474"/>
        <dbReference type="ChEBI" id="CHEBI:57259"/>
        <dbReference type="EC" id="2.4.2.2"/>
    </reaction>
</comment>
<comment type="catalytic activity">
    <reaction evidence="1">
        <text>uridine + phosphate = alpha-D-ribose 1-phosphate + uracil</text>
        <dbReference type="Rhea" id="RHEA:24388"/>
        <dbReference type="ChEBI" id="CHEBI:16704"/>
        <dbReference type="ChEBI" id="CHEBI:17568"/>
        <dbReference type="ChEBI" id="CHEBI:43474"/>
        <dbReference type="ChEBI" id="CHEBI:57720"/>
        <dbReference type="EC" id="2.4.2.2"/>
    </reaction>
</comment>
<comment type="catalytic activity">
    <reaction evidence="1">
        <text>xanthosine + phosphate = alpha-D-ribose 1-phosphate + xanthine</text>
        <dbReference type="Rhea" id="RHEA:27638"/>
        <dbReference type="ChEBI" id="CHEBI:17712"/>
        <dbReference type="ChEBI" id="CHEBI:18107"/>
        <dbReference type="ChEBI" id="CHEBI:43474"/>
        <dbReference type="ChEBI" id="CHEBI:57720"/>
        <dbReference type="EC" id="2.4.2.1"/>
    </reaction>
</comment>
<comment type="similarity">
    <text evidence="1">Belongs to the nucleoside phosphorylase PpnP family.</text>
</comment>
<proteinExistence type="inferred from homology"/>
<name>PPNP_ECOK1</name>
<gene>
    <name evidence="1" type="primary">ppnP</name>
    <name type="ordered locus">Ecok1_03590</name>
    <name type="ORF">APECO1_1617</name>
</gene>
<protein>
    <recommendedName>
        <fullName evidence="1">Pyrimidine/purine nucleoside phosphorylase</fullName>
        <ecNumber evidence="1">2.4.2.1</ecNumber>
        <ecNumber evidence="1">2.4.2.2</ecNumber>
    </recommendedName>
    <alternativeName>
        <fullName evidence="1">Adenosine phosphorylase</fullName>
    </alternativeName>
    <alternativeName>
        <fullName evidence="1">Cytidine phosphorylase</fullName>
    </alternativeName>
    <alternativeName>
        <fullName evidence="1">Guanosine phosphorylase</fullName>
    </alternativeName>
    <alternativeName>
        <fullName evidence="1">Inosine phosphorylase</fullName>
    </alternativeName>
    <alternativeName>
        <fullName evidence="1">Thymidine phosphorylase</fullName>
    </alternativeName>
    <alternativeName>
        <fullName evidence="1">Uridine phosphorylase</fullName>
    </alternativeName>
    <alternativeName>
        <fullName evidence="1">Xanthosine phosphorylase</fullName>
    </alternativeName>
</protein>
<organism>
    <name type="scientific">Escherichia coli O1:K1 / APEC</name>
    <dbReference type="NCBI Taxonomy" id="405955"/>
    <lineage>
        <taxon>Bacteria</taxon>
        <taxon>Pseudomonadati</taxon>
        <taxon>Pseudomonadota</taxon>
        <taxon>Gammaproteobacteria</taxon>
        <taxon>Enterobacterales</taxon>
        <taxon>Enterobacteriaceae</taxon>
        <taxon>Escherichia</taxon>
    </lineage>
</organism>